<sequence length="36" mass="3912">TVIDVKCTSPKQCLPPCKEIYGRHAGAKCMNGKCKC</sequence>
<feature type="chain" id="PRO_0000066832" description="Potassium channel toxin alpha-KTx 2.7">
    <location>
        <begin position="1"/>
        <end position="36" status="greater than"/>
    </location>
</feature>
<feature type="site" description="Basic residue of the functional dyad" evidence="1">
    <location>
        <position position="28"/>
    </location>
</feature>
<feature type="disulfide bond" evidence="2">
    <location>
        <begin position="7"/>
        <end position="29"/>
    </location>
</feature>
<feature type="disulfide bond" evidence="2">
    <location>
        <begin position="13"/>
        <end position="34"/>
    </location>
</feature>
<feature type="disulfide bond" evidence="2">
    <location>
        <begin position="17"/>
        <end position="36"/>
    </location>
</feature>
<feature type="non-terminal residue">
    <location>
        <position position="36"/>
    </location>
</feature>
<comment type="function">
    <text evidence="3">Inhibitor of voltage-gated potassium channels (Kv). This protein is capable of displacing the binding of radio-labeled noxiustoxin (AC P08815) to rat brain synaptosomes with high affinity (about 100 pM). It is also capable of inhibiting transient potassium-currents (resembling I(A)-type currents), in cultured rat cerebellar granule cells. About 50% of the peak currents are reduced by application of a 1.5 uM solution of this toxin. Is lethal to mice (when less than 100 ug are injected).</text>
</comment>
<comment type="subcellular location">
    <subcellularLocation>
        <location evidence="3">Secreted</location>
    </subcellularLocation>
</comment>
<comment type="tissue specificity">
    <text evidence="6">Expressed by the venom gland.</text>
</comment>
<comment type="domain">
    <text evidence="2">Has the structural arrangement of an alpha-helix connected to a beta-sheet by disulfide bonds (CSalpha/beta).</text>
</comment>
<comment type="similarity">
    <text evidence="5">Belongs to the short scorpion toxin superfamily. Potassium channel inhibitor family. Alpha-KTx 02 subfamily.</text>
</comment>
<dbReference type="SMR" id="P45630"/>
<dbReference type="GO" id="GO:0005576">
    <property type="term" value="C:extracellular region"/>
    <property type="evidence" value="ECO:0007669"/>
    <property type="project" value="UniProtKB-SubCell"/>
</dbReference>
<dbReference type="GO" id="GO:0008200">
    <property type="term" value="F:ion channel inhibitor activity"/>
    <property type="evidence" value="ECO:0007669"/>
    <property type="project" value="InterPro"/>
</dbReference>
<dbReference type="GO" id="GO:0015459">
    <property type="term" value="F:potassium channel regulator activity"/>
    <property type="evidence" value="ECO:0007669"/>
    <property type="project" value="UniProtKB-KW"/>
</dbReference>
<dbReference type="GO" id="GO:0090729">
    <property type="term" value="F:toxin activity"/>
    <property type="evidence" value="ECO:0007669"/>
    <property type="project" value="UniProtKB-KW"/>
</dbReference>
<dbReference type="Gene3D" id="3.30.30.10">
    <property type="entry name" value="Knottin, scorpion toxin-like"/>
    <property type="match status" value="1"/>
</dbReference>
<dbReference type="InterPro" id="IPR036574">
    <property type="entry name" value="Scorpion_toxin-like_sf"/>
</dbReference>
<dbReference type="InterPro" id="IPR001947">
    <property type="entry name" value="Scorpion_toxinS_K_inh"/>
</dbReference>
<dbReference type="Pfam" id="PF00451">
    <property type="entry name" value="Toxin_2"/>
    <property type="match status" value="1"/>
</dbReference>
<dbReference type="PRINTS" id="PR00286">
    <property type="entry name" value="CHARYBDTOXIN"/>
</dbReference>
<dbReference type="SUPFAM" id="SSF57095">
    <property type="entry name" value="Scorpion toxin-like"/>
    <property type="match status" value="1"/>
</dbReference>
<dbReference type="PROSITE" id="PS01138">
    <property type="entry name" value="SCORP_SHORT_TOXIN"/>
    <property type="match status" value="1"/>
</dbReference>
<evidence type="ECO:0000250" key="1"/>
<evidence type="ECO:0000250" key="2">
    <source>
        <dbReference type="UniProtKB" id="P59847"/>
    </source>
</evidence>
<evidence type="ECO:0000269" key="3">
    <source>
    </source>
</evidence>
<evidence type="ECO:0000303" key="4">
    <source>
    </source>
</evidence>
<evidence type="ECO:0000305" key="5"/>
<evidence type="ECO:0000305" key="6">
    <source>
    </source>
</evidence>
<keyword id="KW-1221">Calcium-activated potassium channel impairing toxin</keyword>
<keyword id="KW-0903">Direct protein sequencing</keyword>
<keyword id="KW-1015">Disulfide bond</keyword>
<keyword id="KW-0872">Ion channel impairing toxin</keyword>
<keyword id="KW-0528">Neurotoxin</keyword>
<keyword id="KW-0632">Potassium channel impairing toxin</keyword>
<keyword id="KW-0964">Secreted</keyword>
<keyword id="KW-0800">Toxin</keyword>
<organism>
    <name type="scientific">Centruroides limpidus</name>
    <name type="common">Mexican scorpion</name>
    <dbReference type="NCBI Taxonomy" id="6876"/>
    <lineage>
        <taxon>Eukaryota</taxon>
        <taxon>Metazoa</taxon>
        <taxon>Ecdysozoa</taxon>
        <taxon>Arthropoda</taxon>
        <taxon>Chelicerata</taxon>
        <taxon>Arachnida</taxon>
        <taxon>Scorpiones</taxon>
        <taxon>Buthida</taxon>
        <taxon>Buthoidea</taxon>
        <taxon>Buthidae</taxon>
        <taxon>Centruroides</taxon>
    </lineage>
</organism>
<accession>P45630</accession>
<reference key="1">
    <citation type="journal article" date="1994" name="Biochem. J.">
        <title>Novel K(+)-channel-blocking toxins from the venom of the scorpion Centruroides limpidus limpidus Karsch.</title>
        <authorList>
            <person name="Martin B.M."/>
            <person name="Ramirez A.N."/>
            <person name="Gurrola G.B."/>
            <person name="Nobile M."/>
            <person name="Prestipino G."/>
            <person name="Possani L.D."/>
        </authorList>
    </citation>
    <scope>PROTEIN SEQUENCE</scope>
    <scope>SUBCELLULAR LOCATION</scope>
    <scope>FUNCTION</scope>
    <source>
        <tissue>Venom</tissue>
    </source>
</reference>
<name>KAX27_CENLI</name>
<protein>
    <recommendedName>
        <fullName>Potassium channel toxin alpha-KTx 2.7</fullName>
    </recommendedName>
    <alternativeName>
        <fullName evidence="4">C.1.limpidus toxin 2</fullName>
        <shortName evidence="4">CllTx2</shortName>
    </alternativeName>
    <alternativeName>
        <fullName evidence="4">Toxin II.10.9.2</fullName>
    </alternativeName>
</protein>
<proteinExistence type="evidence at protein level"/>